<keyword id="KW-0001">2Fe-2S</keyword>
<keyword id="KW-0003">3Fe-4S</keyword>
<keyword id="KW-0004">4Fe-4S</keyword>
<keyword id="KW-0249">Electron transport</keyword>
<keyword id="KW-0408">Iron</keyword>
<keyword id="KW-0411">Iron-sulfur</keyword>
<keyword id="KW-0472">Membrane</keyword>
<keyword id="KW-0479">Metal-binding</keyword>
<keyword id="KW-0496">Mitochondrion</keyword>
<keyword id="KW-0999">Mitochondrion inner membrane</keyword>
<keyword id="KW-0560">Oxidoreductase</keyword>
<keyword id="KW-1185">Reference proteome</keyword>
<keyword id="KW-0809">Transit peptide</keyword>
<keyword id="KW-0813">Transport</keyword>
<keyword id="KW-0816">Tricarboxylic acid cycle</keyword>
<proteinExistence type="evidence at transcript level"/>
<organism>
    <name type="scientific">Xenopus tropicalis</name>
    <name type="common">Western clawed frog</name>
    <name type="synonym">Silurana tropicalis</name>
    <dbReference type="NCBI Taxonomy" id="8364"/>
    <lineage>
        <taxon>Eukaryota</taxon>
        <taxon>Metazoa</taxon>
        <taxon>Chordata</taxon>
        <taxon>Craniata</taxon>
        <taxon>Vertebrata</taxon>
        <taxon>Euteleostomi</taxon>
        <taxon>Amphibia</taxon>
        <taxon>Batrachia</taxon>
        <taxon>Anura</taxon>
        <taxon>Pipoidea</taxon>
        <taxon>Pipidae</taxon>
        <taxon>Xenopodinae</taxon>
        <taxon>Xenopus</taxon>
        <taxon>Silurana</taxon>
    </lineage>
</organism>
<protein>
    <recommendedName>
        <fullName>Succinate dehydrogenase [ubiquinone] iron-sulfur subunit, mitochondrial</fullName>
        <ecNumber evidence="1">1.3.5.1</ecNumber>
    </recommendedName>
    <alternativeName>
        <fullName>Iron-sulfur subunit of complex II</fullName>
        <shortName>Ip</shortName>
    </alternativeName>
    <alternativeName>
        <fullName>Malate dehydrogenase [quinone] iron-sulfur subunit</fullName>
        <ecNumber evidence="3">1.1.5.-</ecNumber>
    </alternativeName>
</protein>
<sequence length="284" mass="32087">MAAVVFSLRRSGPVFRLPGVLQVCRGAQTAAAAAPASQAEARIKKFAIYRWDPDKPGDKPRMQTYEVDLNECGSMVLDALIKIKNEMDPTLTFRRSCREGICGSCAMNINGGNTLACTVRIDTNLSKVSKIYPLPHMYVVKDLVPDLSNFYAQYKSIEPYLKKKDESQEGKEQYLQSIEDRDKLDGLYECILCACCSTSCPSYWWNADKYLGPAVLMQAYRWMIDSRDDYTEERLAKLQDPFSLYRCHTIMNCTRTCPKGLNPGKAIAEIKKMMATYKERAASV</sequence>
<accession>B0BM36</accession>
<feature type="transit peptide" description="Mitochondrion" evidence="1">
    <location>
        <begin position="1"/>
        <end position="26"/>
    </location>
</feature>
<feature type="chain" id="PRO_0000343803" description="Succinate dehydrogenase [ubiquinone] iron-sulfur subunit, mitochondrial">
    <location>
        <begin position="27"/>
        <end position="284"/>
    </location>
</feature>
<feature type="domain" description="2Fe-2S ferredoxin-type" evidence="5">
    <location>
        <begin position="44"/>
        <end position="137"/>
    </location>
</feature>
<feature type="domain" description="4Fe-4S ferredoxin-type" evidence="6">
    <location>
        <begin position="180"/>
        <end position="210"/>
    </location>
</feature>
<feature type="binding site" evidence="2">
    <location>
        <position position="97"/>
    </location>
    <ligand>
        <name>[2Fe-2S] cluster</name>
        <dbReference type="ChEBI" id="CHEBI:190135"/>
    </ligand>
</feature>
<feature type="binding site" evidence="2">
    <location>
        <position position="102"/>
    </location>
    <ligand>
        <name>[2Fe-2S] cluster</name>
        <dbReference type="ChEBI" id="CHEBI:190135"/>
    </ligand>
</feature>
<feature type="binding site" evidence="2">
    <location>
        <position position="105"/>
    </location>
    <ligand>
        <name>[2Fe-2S] cluster</name>
        <dbReference type="ChEBI" id="CHEBI:190135"/>
    </ligand>
</feature>
<feature type="binding site" evidence="2">
    <location>
        <position position="117"/>
    </location>
    <ligand>
        <name>[2Fe-2S] cluster</name>
        <dbReference type="ChEBI" id="CHEBI:190135"/>
    </ligand>
</feature>
<feature type="binding site" evidence="2">
    <location>
        <position position="190"/>
    </location>
    <ligand>
        <name>[4Fe-4S] cluster</name>
        <dbReference type="ChEBI" id="CHEBI:49883"/>
    </ligand>
</feature>
<feature type="binding site" evidence="2">
    <location>
        <position position="193"/>
    </location>
    <ligand>
        <name>[4Fe-4S] cluster</name>
        <dbReference type="ChEBI" id="CHEBI:49883"/>
    </ligand>
</feature>
<feature type="binding site" evidence="2">
    <location>
        <position position="196"/>
    </location>
    <ligand>
        <name>[4Fe-4S] cluster</name>
        <dbReference type="ChEBI" id="CHEBI:49883"/>
    </ligand>
</feature>
<feature type="binding site" evidence="2">
    <location>
        <position position="200"/>
    </location>
    <ligand>
        <name>[3Fe-4S] cluster</name>
        <dbReference type="ChEBI" id="CHEBI:21137"/>
    </ligand>
</feature>
<feature type="binding site" evidence="2">
    <location>
        <position position="205"/>
    </location>
    <ligand>
        <name>a ubiquinone</name>
        <dbReference type="ChEBI" id="CHEBI:16389"/>
        <note>ligand shared with dhsd</note>
    </ligand>
</feature>
<feature type="binding site" evidence="2">
    <location>
        <position position="247"/>
    </location>
    <ligand>
        <name>[3Fe-4S] cluster</name>
        <dbReference type="ChEBI" id="CHEBI:21137"/>
    </ligand>
</feature>
<feature type="binding site" evidence="2">
    <location>
        <position position="253"/>
    </location>
    <ligand>
        <name>[3Fe-4S] cluster</name>
        <dbReference type="ChEBI" id="CHEBI:21137"/>
    </ligand>
</feature>
<feature type="binding site" evidence="2">
    <location>
        <position position="257"/>
    </location>
    <ligand>
        <name>[4Fe-4S] cluster</name>
        <dbReference type="ChEBI" id="CHEBI:49883"/>
    </ligand>
</feature>
<name>SDHB_XENTR</name>
<comment type="function">
    <text evidence="1 3">Iron-sulfur protein (IP) subunit of the succinate dehydrogenase complex (mitochondrial respiratory chain complex II), responsible for transferring electrons from succinate to ubiquinone (coenzyme Q) (By similarity). SDH also oxidizes malate to the non-canonical enol form of oxaloacetate, enol-oxaloacetate. Enol-oxaloacetate, which is a potent inhibitor of the succinate dehydrogenase activity, is further isomerized into keto-oxaloacetate (By similarity).</text>
</comment>
<comment type="catalytic activity">
    <reaction evidence="1">
        <text>a quinone + succinate = fumarate + a quinol</text>
        <dbReference type="Rhea" id="RHEA:40523"/>
        <dbReference type="ChEBI" id="CHEBI:24646"/>
        <dbReference type="ChEBI" id="CHEBI:29806"/>
        <dbReference type="ChEBI" id="CHEBI:30031"/>
        <dbReference type="ChEBI" id="CHEBI:132124"/>
        <dbReference type="EC" id="1.3.5.1"/>
    </reaction>
</comment>
<comment type="catalytic activity">
    <reaction evidence="3">
        <text>(R)-malate + a quinone = enol-oxaloacetate + a quinol</text>
        <dbReference type="Rhea" id="RHEA:79827"/>
        <dbReference type="ChEBI" id="CHEBI:15588"/>
        <dbReference type="ChEBI" id="CHEBI:17479"/>
        <dbReference type="ChEBI" id="CHEBI:24646"/>
        <dbReference type="ChEBI" id="CHEBI:132124"/>
    </reaction>
    <physiologicalReaction direction="left-to-right" evidence="3">
        <dbReference type="Rhea" id="RHEA:79828"/>
    </physiologicalReaction>
</comment>
<comment type="catalytic activity">
    <reaction evidence="3">
        <text>(S)-malate + a quinone = enol-oxaloacetate + a quinol</text>
        <dbReference type="Rhea" id="RHEA:79831"/>
        <dbReference type="ChEBI" id="CHEBI:15589"/>
        <dbReference type="ChEBI" id="CHEBI:17479"/>
        <dbReference type="ChEBI" id="CHEBI:24646"/>
        <dbReference type="ChEBI" id="CHEBI:132124"/>
    </reaction>
    <physiologicalReaction direction="left-to-right" evidence="3">
        <dbReference type="Rhea" id="RHEA:79832"/>
    </physiologicalReaction>
</comment>
<comment type="cofactor">
    <cofactor evidence="2">
        <name>[2Fe-2S] cluster</name>
        <dbReference type="ChEBI" id="CHEBI:190135"/>
    </cofactor>
    <text evidence="2">Binds 1 [2Fe-2S] cluster.</text>
</comment>
<comment type="cofactor">
    <cofactor evidence="2">
        <name>[3Fe-4S] cluster</name>
        <dbReference type="ChEBI" id="CHEBI:21137"/>
    </cofactor>
    <text evidence="2">Binds 1 [3Fe-4S] cluster.</text>
</comment>
<comment type="cofactor">
    <cofactor evidence="2">
        <name>[4Fe-4S] cluster</name>
        <dbReference type="ChEBI" id="CHEBI:49883"/>
    </cofactor>
    <text evidence="2">Binds 1 [4Fe-4S] cluster.</text>
</comment>
<comment type="activity regulation">
    <text evidence="3">Enol-oxaloacetate inhibits the succinate dehydrogenase activity.</text>
</comment>
<comment type="pathway">
    <text>Carbohydrate metabolism; tricarboxylic acid cycle; fumarate from succinate (eukaryal route): step 1/1.</text>
</comment>
<comment type="subunit">
    <text evidence="1">Component of complex II composed of four subunits: the flavoprotein (FP) sdha, iron-sulfur protein (IP) sdhb, and a cytochrome b composed of sdhc and sdhd.</text>
</comment>
<comment type="subcellular location">
    <subcellularLocation>
        <location evidence="4">Mitochondrion inner membrane</location>
        <topology evidence="4">Peripheral membrane protein</topology>
        <orientation evidence="4">Matrix side</orientation>
    </subcellularLocation>
</comment>
<comment type="similarity">
    <text evidence="7">Belongs to the succinate dehydrogenase/fumarate reductase iron-sulfur protein family.</text>
</comment>
<dbReference type="EC" id="1.3.5.1" evidence="1"/>
<dbReference type="EC" id="1.1.5.-" evidence="3"/>
<dbReference type="EMBL" id="BC158270">
    <property type="protein sequence ID" value="AAI58271.1"/>
    <property type="molecule type" value="mRNA"/>
</dbReference>
<dbReference type="RefSeq" id="NP_001120000.1">
    <property type="nucleotide sequence ID" value="NM_001126528.1"/>
</dbReference>
<dbReference type="SMR" id="B0BM36"/>
<dbReference type="FunCoup" id="B0BM36">
    <property type="interactions" value="1546"/>
</dbReference>
<dbReference type="PaxDb" id="8364-ENSXETP00000029442"/>
<dbReference type="GeneID" id="100144957"/>
<dbReference type="KEGG" id="xtr:100144957"/>
<dbReference type="AGR" id="Xenbase:XB-GENE-970193"/>
<dbReference type="CTD" id="6390"/>
<dbReference type="Xenbase" id="XB-GENE-970193">
    <property type="gene designation" value="sdhb"/>
</dbReference>
<dbReference type="eggNOG" id="KOG3049">
    <property type="taxonomic scope" value="Eukaryota"/>
</dbReference>
<dbReference type="HOGENOM" id="CLU_044838_0_2_1"/>
<dbReference type="InParanoid" id="B0BM36"/>
<dbReference type="OMA" id="DGQYFGP"/>
<dbReference type="OrthoDB" id="1696654at2759"/>
<dbReference type="PhylomeDB" id="B0BM36"/>
<dbReference type="TreeFam" id="TF300754"/>
<dbReference type="Reactome" id="R-XTR-71403">
    <property type="pathway name" value="Citric acid cycle (TCA cycle)"/>
</dbReference>
<dbReference type="Reactome" id="R-XTR-9854311">
    <property type="pathway name" value="Maturation of TCA enzymes and regulation of TCA cycle"/>
</dbReference>
<dbReference type="UniPathway" id="UPA00223">
    <property type="reaction ID" value="UER01006"/>
</dbReference>
<dbReference type="Proteomes" id="UP000008143">
    <property type="component" value="Chromosome 7"/>
</dbReference>
<dbReference type="Bgee" id="ENSXETG00000013435">
    <property type="expression patterns" value="Expressed in skeletal muscle tissue and 12 other cell types or tissues"/>
</dbReference>
<dbReference type="GO" id="GO:0005743">
    <property type="term" value="C:mitochondrial inner membrane"/>
    <property type="evidence" value="ECO:0000250"/>
    <property type="project" value="UniProtKB"/>
</dbReference>
<dbReference type="GO" id="GO:0045273">
    <property type="term" value="C:respiratory chain complex II (succinate dehydrogenase)"/>
    <property type="evidence" value="ECO:0000250"/>
    <property type="project" value="UniProtKB"/>
</dbReference>
<dbReference type="GO" id="GO:0051537">
    <property type="term" value="F:2 iron, 2 sulfur cluster binding"/>
    <property type="evidence" value="ECO:0000250"/>
    <property type="project" value="UniProtKB"/>
</dbReference>
<dbReference type="GO" id="GO:0051538">
    <property type="term" value="F:3 iron, 4 sulfur cluster binding"/>
    <property type="evidence" value="ECO:0000250"/>
    <property type="project" value="UniProtKB"/>
</dbReference>
<dbReference type="GO" id="GO:0051539">
    <property type="term" value="F:4 iron, 4 sulfur cluster binding"/>
    <property type="evidence" value="ECO:0000250"/>
    <property type="project" value="UniProtKB"/>
</dbReference>
<dbReference type="GO" id="GO:0009055">
    <property type="term" value="F:electron transfer activity"/>
    <property type="evidence" value="ECO:0007669"/>
    <property type="project" value="InterPro"/>
</dbReference>
<dbReference type="GO" id="GO:0046872">
    <property type="term" value="F:metal ion binding"/>
    <property type="evidence" value="ECO:0007669"/>
    <property type="project" value="UniProtKB-KW"/>
</dbReference>
<dbReference type="GO" id="GO:0008177">
    <property type="term" value="F:succinate dehydrogenase (quinone) activity"/>
    <property type="evidence" value="ECO:0000250"/>
    <property type="project" value="UniProtKB"/>
</dbReference>
<dbReference type="GO" id="GO:0048039">
    <property type="term" value="F:ubiquinone binding"/>
    <property type="evidence" value="ECO:0000250"/>
    <property type="project" value="UniProtKB"/>
</dbReference>
<dbReference type="GO" id="GO:0006099">
    <property type="term" value="P:tricarboxylic acid cycle"/>
    <property type="evidence" value="ECO:0007669"/>
    <property type="project" value="UniProtKB-UniPathway"/>
</dbReference>
<dbReference type="CDD" id="cd00207">
    <property type="entry name" value="fer2"/>
    <property type="match status" value="1"/>
</dbReference>
<dbReference type="FunFam" id="1.10.1060.10:FF:000029">
    <property type="entry name" value="Succinate dehydrogenase [ubiquinone] iron-sulfur subunit, mitochondrial"/>
    <property type="match status" value="1"/>
</dbReference>
<dbReference type="FunFam" id="3.10.20.30:FF:000007">
    <property type="entry name" value="Succinate dehydrogenase [ubiquinone] iron-sulfur subunit, mitochondrial"/>
    <property type="match status" value="1"/>
</dbReference>
<dbReference type="Gene3D" id="3.10.20.30">
    <property type="match status" value="1"/>
</dbReference>
<dbReference type="Gene3D" id="1.10.1060.10">
    <property type="entry name" value="Alpha-helical ferredoxin"/>
    <property type="match status" value="1"/>
</dbReference>
<dbReference type="InterPro" id="IPR036010">
    <property type="entry name" value="2Fe-2S_ferredoxin-like_sf"/>
</dbReference>
<dbReference type="InterPro" id="IPR001041">
    <property type="entry name" value="2Fe-2S_ferredoxin-type"/>
</dbReference>
<dbReference type="InterPro" id="IPR006058">
    <property type="entry name" value="2Fe2S_fd_BS"/>
</dbReference>
<dbReference type="InterPro" id="IPR017896">
    <property type="entry name" value="4Fe4S_Fe-S-bd"/>
</dbReference>
<dbReference type="InterPro" id="IPR017900">
    <property type="entry name" value="4Fe4S_Fe_S_CS"/>
</dbReference>
<dbReference type="InterPro" id="IPR012675">
    <property type="entry name" value="Beta-grasp_dom_sf"/>
</dbReference>
<dbReference type="InterPro" id="IPR009051">
    <property type="entry name" value="Helical_ferredxn"/>
</dbReference>
<dbReference type="InterPro" id="IPR050573">
    <property type="entry name" value="SDH/FRD_Iron-Sulfur"/>
</dbReference>
<dbReference type="InterPro" id="IPR004489">
    <property type="entry name" value="Succ_DH/fum_Rdtase_Fe-S"/>
</dbReference>
<dbReference type="InterPro" id="IPR025192">
    <property type="entry name" value="Succ_DH/fum_Rdtase_N"/>
</dbReference>
<dbReference type="NCBIfam" id="TIGR00384">
    <property type="entry name" value="dhsB"/>
    <property type="match status" value="1"/>
</dbReference>
<dbReference type="NCBIfam" id="NF004616">
    <property type="entry name" value="PRK05950.1"/>
    <property type="match status" value="1"/>
</dbReference>
<dbReference type="PANTHER" id="PTHR11921:SF29">
    <property type="entry name" value="SUCCINATE DEHYDROGENASE [UBIQUINONE] IRON-SULFUR SUBUNIT, MITOCHONDRIAL"/>
    <property type="match status" value="1"/>
</dbReference>
<dbReference type="PANTHER" id="PTHR11921">
    <property type="entry name" value="SUCCINATE DEHYDROGENASE IRON-SULFUR PROTEIN"/>
    <property type="match status" value="1"/>
</dbReference>
<dbReference type="Pfam" id="PF13085">
    <property type="entry name" value="Fer2_3"/>
    <property type="match status" value="1"/>
</dbReference>
<dbReference type="Pfam" id="PF13534">
    <property type="entry name" value="Fer4_17"/>
    <property type="match status" value="1"/>
</dbReference>
<dbReference type="SUPFAM" id="SSF54292">
    <property type="entry name" value="2Fe-2S ferredoxin-like"/>
    <property type="match status" value="1"/>
</dbReference>
<dbReference type="SUPFAM" id="SSF46548">
    <property type="entry name" value="alpha-helical ferredoxin"/>
    <property type="match status" value="1"/>
</dbReference>
<dbReference type="PROSITE" id="PS00197">
    <property type="entry name" value="2FE2S_FER_1"/>
    <property type="match status" value="1"/>
</dbReference>
<dbReference type="PROSITE" id="PS51085">
    <property type="entry name" value="2FE2S_FER_2"/>
    <property type="match status" value="1"/>
</dbReference>
<dbReference type="PROSITE" id="PS00198">
    <property type="entry name" value="4FE4S_FER_1"/>
    <property type="match status" value="1"/>
</dbReference>
<dbReference type="PROSITE" id="PS51379">
    <property type="entry name" value="4FE4S_FER_2"/>
    <property type="match status" value="1"/>
</dbReference>
<evidence type="ECO:0000250" key="1">
    <source>
        <dbReference type="UniProtKB" id="P21912"/>
    </source>
</evidence>
<evidence type="ECO:0000250" key="2">
    <source>
        <dbReference type="UniProtKB" id="Q007T0"/>
    </source>
</evidence>
<evidence type="ECO:0000250" key="3">
    <source>
        <dbReference type="UniProtKB" id="Q3T189"/>
    </source>
</evidence>
<evidence type="ECO:0000250" key="4">
    <source>
        <dbReference type="UniProtKB" id="Q9YHT2"/>
    </source>
</evidence>
<evidence type="ECO:0000255" key="5">
    <source>
        <dbReference type="PROSITE-ProRule" id="PRU00465"/>
    </source>
</evidence>
<evidence type="ECO:0000255" key="6">
    <source>
        <dbReference type="PROSITE-ProRule" id="PRU00711"/>
    </source>
</evidence>
<evidence type="ECO:0000305" key="7"/>
<reference key="1">
    <citation type="submission" date="2008-01" db="EMBL/GenBank/DDBJ databases">
        <authorList>
            <consortium name="NIH - Xenopus Gene Collection (XGC) project"/>
        </authorList>
    </citation>
    <scope>NUCLEOTIDE SEQUENCE [LARGE SCALE MRNA]</scope>
    <source>
        <tissue>Testis</tissue>
    </source>
</reference>
<gene>
    <name type="primary">sdhb</name>
</gene>